<evidence type="ECO:0000255" key="1">
    <source>
        <dbReference type="HAMAP-Rule" id="MF_03136"/>
    </source>
</evidence>
<protein>
    <recommendedName>
        <fullName evidence="1">Catabolic 3-dehydroquinase</fullName>
        <shortName evidence="1">cDHQase</shortName>
        <ecNumber evidence="1">4.2.1.10</ecNumber>
    </recommendedName>
    <alternativeName>
        <fullName evidence="1">3-dehydroquinate dehydratase</fullName>
    </alternativeName>
</protein>
<comment type="function">
    <text evidence="1">Is involved in the catabolism of quinate. Allows the utilization of quinate as carbon source via the beta-ketoadipate pathway.</text>
</comment>
<comment type="catalytic activity">
    <reaction evidence="1">
        <text>3-dehydroquinate = 3-dehydroshikimate + H2O</text>
        <dbReference type="Rhea" id="RHEA:21096"/>
        <dbReference type="ChEBI" id="CHEBI:15377"/>
        <dbReference type="ChEBI" id="CHEBI:16630"/>
        <dbReference type="ChEBI" id="CHEBI:32364"/>
        <dbReference type="EC" id="4.2.1.10"/>
    </reaction>
</comment>
<comment type="pathway">
    <text evidence="1">Aromatic compound metabolism; 3,4-dihydroxybenzoate biosynthesis; 3,4-dihydroxybenzoate from 3-dehydroquinate: step 1/2.</text>
</comment>
<comment type="subunit">
    <text evidence="1">Homododecamer. Adopts a ring-like structure, composed of an arrangement of two hexameric rings stacked on top of one another.</text>
</comment>
<comment type="similarity">
    <text evidence="1">Belongs to the type-II 3-dehydroquinase family.</text>
</comment>
<keyword id="KW-0456">Lyase</keyword>
<keyword id="KW-0672">Quinate metabolism</keyword>
<keyword id="KW-1185">Reference proteome</keyword>
<dbReference type="EC" id="4.2.1.10" evidence="1"/>
<dbReference type="EMBL" id="CH476650">
    <property type="protein sequence ID" value="EDO00307.1"/>
    <property type="molecule type" value="Genomic_DNA"/>
</dbReference>
<dbReference type="RefSeq" id="XP_001584894.1">
    <property type="nucleotide sequence ID" value="XM_001584844.1"/>
</dbReference>
<dbReference type="SMR" id="A7F996"/>
<dbReference type="STRING" id="665079.A7F996"/>
<dbReference type="GeneID" id="5480949"/>
<dbReference type="KEGG" id="ssl:SS1G_14177"/>
<dbReference type="VEuPathDB" id="FungiDB:sscle_08g068230"/>
<dbReference type="InParanoid" id="A7F996"/>
<dbReference type="OMA" id="AYTHYSY"/>
<dbReference type="OrthoDB" id="8191625at2759"/>
<dbReference type="UniPathway" id="UPA00088">
    <property type="reaction ID" value="UER00178"/>
</dbReference>
<dbReference type="Proteomes" id="UP000001312">
    <property type="component" value="Unassembled WGS sequence"/>
</dbReference>
<dbReference type="GO" id="GO:0003855">
    <property type="term" value="F:3-dehydroquinate dehydratase activity"/>
    <property type="evidence" value="ECO:0000318"/>
    <property type="project" value="GO_Central"/>
</dbReference>
<dbReference type="GO" id="GO:0046279">
    <property type="term" value="P:3,4-dihydroxybenzoate biosynthetic process"/>
    <property type="evidence" value="ECO:0007669"/>
    <property type="project" value="UniProtKB-UniRule"/>
</dbReference>
<dbReference type="GO" id="GO:0019631">
    <property type="term" value="P:quinate catabolic process"/>
    <property type="evidence" value="ECO:0000318"/>
    <property type="project" value="GO_Central"/>
</dbReference>
<dbReference type="CDD" id="cd00466">
    <property type="entry name" value="DHQase_II"/>
    <property type="match status" value="1"/>
</dbReference>
<dbReference type="Gene3D" id="3.40.50.9100">
    <property type="entry name" value="Dehydroquinase, class II"/>
    <property type="match status" value="1"/>
</dbReference>
<dbReference type="HAMAP" id="MF_00169">
    <property type="entry name" value="AroQ"/>
    <property type="match status" value="1"/>
</dbReference>
<dbReference type="InterPro" id="IPR001874">
    <property type="entry name" value="DHquinase_II"/>
</dbReference>
<dbReference type="InterPro" id="IPR018509">
    <property type="entry name" value="DHquinase_II_CS"/>
</dbReference>
<dbReference type="InterPro" id="IPR036441">
    <property type="entry name" value="DHquinase_II_sf"/>
</dbReference>
<dbReference type="NCBIfam" id="TIGR01088">
    <property type="entry name" value="aroQ"/>
    <property type="match status" value="1"/>
</dbReference>
<dbReference type="NCBIfam" id="NF003804">
    <property type="entry name" value="PRK05395.1-1"/>
    <property type="match status" value="1"/>
</dbReference>
<dbReference type="NCBIfam" id="NF003805">
    <property type="entry name" value="PRK05395.1-2"/>
    <property type="match status" value="1"/>
</dbReference>
<dbReference type="NCBIfam" id="NF003806">
    <property type="entry name" value="PRK05395.1-3"/>
    <property type="match status" value="1"/>
</dbReference>
<dbReference type="NCBIfam" id="NF003807">
    <property type="entry name" value="PRK05395.1-4"/>
    <property type="match status" value="1"/>
</dbReference>
<dbReference type="PANTHER" id="PTHR21272">
    <property type="entry name" value="CATABOLIC 3-DEHYDROQUINASE"/>
    <property type="match status" value="1"/>
</dbReference>
<dbReference type="PANTHER" id="PTHR21272:SF3">
    <property type="entry name" value="CATABOLIC 3-DEHYDROQUINASE"/>
    <property type="match status" value="1"/>
</dbReference>
<dbReference type="Pfam" id="PF01220">
    <property type="entry name" value="DHquinase_II"/>
    <property type="match status" value="1"/>
</dbReference>
<dbReference type="PIRSF" id="PIRSF001399">
    <property type="entry name" value="DHquinase_II"/>
    <property type="match status" value="1"/>
</dbReference>
<dbReference type="SUPFAM" id="SSF52304">
    <property type="entry name" value="Type II 3-dehydroquinate dehydratase"/>
    <property type="match status" value="1"/>
</dbReference>
<dbReference type="PROSITE" id="PS01029">
    <property type="entry name" value="DEHYDROQUINASE_II"/>
    <property type="match status" value="1"/>
</dbReference>
<proteinExistence type="inferred from homology"/>
<organism>
    <name type="scientific">Sclerotinia sclerotiorum (strain ATCC 18683 / 1980 / Ss-1)</name>
    <name type="common">White mold</name>
    <name type="synonym">Whetzelinia sclerotiorum</name>
    <dbReference type="NCBI Taxonomy" id="665079"/>
    <lineage>
        <taxon>Eukaryota</taxon>
        <taxon>Fungi</taxon>
        <taxon>Dikarya</taxon>
        <taxon>Ascomycota</taxon>
        <taxon>Pezizomycotina</taxon>
        <taxon>Leotiomycetes</taxon>
        <taxon>Helotiales</taxon>
        <taxon>Sclerotiniaceae</taxon>
        <taxon>Sclerotinia</taxon>
    </lineage>
</organism>
<feature type="chain" id="PRO_0000402378" description="Catabolic 3-dehydroquinase">
    <location>
        <begin position="1"/>
        <end position="154"/>
    </location>
</feature>
<feature type="active site" description="Proton acceptor" evidence="1">
    <location>
        <position position="25"/>
    </location>
</feature>
<feature type="active site" description="Proton donor" evidence="1">
    <location>
        <position position="105"/>
    </location>
</feature>
<feature type="binding site" evidence="1">
    <location>
        <position position="79"/>
    </location>
    <ligand>
        <name>substrate</name>
    </ligand>
</feature>
<feature type="binding site" evidence="1">
    <location>
        <position position="85"/>
    </location>
    <ligand>
        <name>substrate</name>
    </ligand>
</feature>
<feature type="binding site" evidence="1">
    <location>
        <position position="92"/>
    </location>
    <ligand>
        <name>substrate</name>
    </ligand>
</feature>
<feature type="binding site" evidence="1">
    <location>
        <begin position="106"/>
        <end position="107"/>
    </location>
    <ligand>
        <name>substrate</name>
    </ligand>
</feature>
<feature type="binding site" evidence="1">
    <location>
        <position position="116"/>
    </location>
    <ligand>
        <name>substrate</name>
    </ligand>
</feature>
<feature type="site" description="Transition state stabilizer" evidence="1">
    <location>
        <position position="20"/>
    </location>
</feature>
<sequence length="154" mass="17142">MPIKKILLLNGPNLNLLGTREPHIYGYDTLASIESSLSTYLSSLTPSVELLTFQSNWEGALIDRIHEARTDGTDAIVINPAAFTHYSVALRDALTGVDIPFVEVHISNVHKREEFRHKSFLSDKAEAVICGLGVFGYRAAVEWCVGYLKERPKL</sequence>
<accession>A7F996</accession>
<name>3DHQ_SCLS1</name>
<gene>
    <name evidence="1" type="primary">qutE</name>
    <name type="ORF">SS1G_14177</name>
</gene>
<reference key="1">
    <citation type="journal article" date="2011" name="PLoS Genet.">
        <title>Genomic analysis of the necrotrophic fungal pathogens Sclerotinia sclerotiorum and Botrytis cinerea.</title>
        <authorList>
            <person name="Amselem J."/>
            <person name="Cuomo C.A."/>
            <person name="van Kan J.A.L."/>
            <person name="Viaud M."/>
            <person name="Benito E.P."/>
            <person name="Couloux A."/>
            <person name="Coutinho P.M."/>
            <person name="de Vries R.P."/>
            <person name="Dyer P.S."/>
            <person name="Fillinger S."/>
            <person name="Fournier E."/>
            <person name="Gout L."/>
            <person name="Hahn M."/>
            <person name="Kohn L."/>
            <person name="Lapalu N."/>
            <person name="Plummer K.M."/>
            <person name="Pradier J.-M."/>
            <person name="Quevillon E."/>
            <person name="Sharon A."/>
            <person name="Simon A."/>
            <person name="ten Have A."/>
            <person name="Tudzynski B."/>
            <person name="Tudzynski P."/>
            <person name="Wincker P."/>
            <person name="Andrew M."/>
            <person name="Anthouard V."/>
            <person name="Beever R.E."/>
            <person name="Beffa R."/>
            <person name="Benoit I."/>
            <person name="Bouzid O."/>
            <person name="Brault B."/>
            <person name="Chen Z."/>
            <person name="Choquer M."/>
            <person name="Collemare J."/>
            <person name="Cotton P."/>
            <person name="Danchin E.G."/>
            <person name="Da Silva C."/>
            <person name="Gautier A."/>
            <person name="Giraud C."/>
            <person name="Giraud T."/>
            <person name="Gonzalez C."/>
            <person name="Grossetete S."/>
            <person name="Gueldener U."/>
            <person name="Henrissat B."/>
            <person name="Howlett B.J."/>
            <person name="Kodira C."/>
            <person name="Kretschmer M."/>
            <person name="Lappartient A."/>
            <person name="Leroch M."/>
            <person name="Levis C."/>
            <person name="Mauceli E."/>
            <person name="Neuveglise C."/>
            <person name="Oeser B."/>
            <person name="Pearson M."/>
            <person name="Poulain J."/>
            <person name="Poussereau N."/>
            <person name="Quesneville H."/>
            <person name="Rascle C."/>
            <person name="Schumacher J."/>
            <person name="Segurens B."/>
            <person name="Sexton A."/>
            <person name="Silva E."/>
            <person name="Sirven C."/>
            <person name="Soanes D.M."/>
            <person name="Talbot N.J."/>
            <person name="Templeton M."/>
            <person name="Yandava C."/>
            <person name="Yarden O."/>
            <person name="Zeng Q."/>
            <person name="Rollins J.A."/>
            <person name="Lebrun M.-H."/>
            <person name="Dickman M."/>
        </authorList>
    </citation>
    <scope>NUCLEOTIDE SEQUENCE [LARGE SCALE GENOMIC DNA]</scope>
    <source>
        <strain>ATCC 18683 / 1980 / Ss-1</strain>
    </source>
</reference>